<sequence>MRLPIFLDTDPGIDDAVAIAAAIFAPELDLQLMTTVAGNVSVEKTTRNALQLLHFWNAEIPLAQGAAVPLVRAPRDAASVHGESGMAGYDFVEHNRKPLGIPAFLAIRDALMRAPEPVTLVAIGPLTNIALLLLQCPECKPYIRRLVIMGGSAGRGNCTPNAEFNIAADPEAAACVFRSGIEIVMCGLDVTNQAILTPDYLATLPELNRTGKMLHALFSHYRSGSMQSGLRMHDLCAIAWLVRPDLFTLKPCFVAVETQGEFTSGTTVVDIDGCLGKPANVQVALDLNVKGFQQWVAEVLALVP</sequence>
<feature type="chain" id="PRO_0000206838" description="Non-specific ribonucleoside hydrolase RihC">
    <location>
        <begin position="1"/>
        <end position="304"/>
    </location>
</feature>
<feature type="active site" evidence="1">
    <location>
        <position position="233"/>
    </location>
</feature>
<reference key="1">
    <citation type="journal article" date="2002" name="Nucleic Acids Res.">
        <title>Genome sequence of Shigella flexneri 2a: insights into pathogenicity through comparison with genomes of Escherichia coli K12 and O157.</title>
        <authorList>
            <person name="Jin Q."/>
            <person name="Yuan Z."/>
            <person name="Xu J."/>
            <person name="Wang Y."/>
            <person name="Shen Y."/>
            <person name="Lu W."/>
            <person name="Wang J."/>
            <person name="Liu H."/>
            <person name="Yang J."/>
            <person name="Yang F."/>
            <person name="Zhang X."/>
            <person name="Zhang J."/>
            <person name="Yang G."/>
            <person name="Wu H."/>
            <person name="Qu D."/>
            <person name="Dong J."/>
            <person name="Sun L."/>
            <person name="Xue Y."/>
            <person name="Zhao A."/>
            <person name="Gao Y."/>
            <person name="Zhu J."/>
            <person name="Kan B."/>
            <person name="Ding K."/>
            <person name="Chen S."/>
            <person name="Cheng H."/>
            <person name="Yao Z."/>
            <person name="He B."/>
            <person name="Chen R."/>
            <person name="Ma D."/>
            <person name="Qiang B."/>
            <person name="Wen Y."/>
            <person name="Hou Y."/>
            <person name="Yu J."/>
        </authorList>
    </citation>
    <scope>NUCLEOTIDE SEQUENCE [LARGE SCALE GENOMIC DNA]</scope>
    <source>
        <strain>301 / Serotype 2a</strain>
    </source>
</reference>
<reference key="2">
    <citation type="journal article" date="2003" name="Infect. Immun.">
        <title>Complete genome sequence and comparative genomics of Shigella flexneri serotype 2a strain 2457T.</title>
        <authorList>
            <person name="Wei J."/>
            <person name="Goldberg M.B."/>
            <person name="Burland V."/>
            <person name="Venkatesan M.M."/>
            <person name="Deng W."/>
            <person name="Fournier G."/>
            <person name="Mayhew G.F."/>
            <person name="Plunkett G. III"/>
            <person name="Rose D.J."/>
            <person name="Darling A."/>
            <person name="Mau B."/>
            <person name="Perna N.T."/>
            <person name="Payne S.M."/>
            <person name="Runyen-Janecky L.J."/>
            <person name="Zhou S."/>
            <person name="Schwartz D.C."/>
            <person name="Blattner F.R."/>
        </authorList>
    </citation>
    <scope>NUCLEOTIDE SEQUENCE [LARGE SCALE GENOMIC DNA]</scope>
    <source>
        <strain>ATCC 700930 / 2457T / Serotype 2a</strain>
    </source>
</reference>
<organism>
    <name type="scientific">Shigella flexneri</name>
    <dbReference type="NCBI Taxonomy" id="623"/>
    <lineage>
        <taxon>Bacteria</taxon>
        <taxon>Pseudomonadati</taxon>
        <taxon>Pseudomonadota</taxon>
        <taxon>Gammaproteobacteria</taxon>
        <taxon>Enterobacterales</taxon>
        <taxon>Enterobacteriaceae</taxon>
        <taxon>Shigella</taxon>
    </lineage>
</organism>
<name>RIHC_SHIFL</name>
<keyword id="KW-0326">Glycosidase</keyword>
<keyword id="KW-0378">Hydrolase</keyword>
<keyword id="KW-1185">Reference proteome</keyword>
<comment type="function">
    <text evidence="1">Hydrolyzes both purine and pyrimidine ribonucleosides with a broad-substrate specificity.</text>
</comment>
<comment type="similarity">
    <text evidence="1">Belongs to the IUNH family. RihC subfamily.</text>
</comment>
<accession>Q83MH0</accession>
<accession>Q7C3C2</accession>
<protein>
    <recommendedName>
        <fullName evidence="1">Non-specific ribonucleoside hydrolase RihC</fullName>
        <ecNumber evidence="1">3.2.-.-</ecNumber>
    </recommendedName>
    <alternativeName>
        <fullName evidence="1">Purine/pyrimidine ribonucleoside hydrolase</fullName>
    </alternativeName>
</protein>
<dbReference type="EC" id="3.2.-.-" evidence="1"/>
<dbReference type="EMBL" id="AE005674">
    <property type="protein sequence ID" value="AAN41693.1"/>
    <property type="molecule type" value="Genomic_DNA"/>
</dbReference>
<dbReference type="EMBL" id="AE014073">
    <property type="protein sequence ID" value="AAP15574.1"/>
    <property type="molecule type" value="Genomic_DNA"/>
</dbReference>
<dbReference type="RefSeq" id="WP_001239124.1">
    <property type="nucleotide sequence ID" value="NZ_WPGW01000005.1"/>
</dbReference>
<dbReference type="SMR" id="Q83MH0"/>
<dbReference type="STRING" id="198214.SF0027"/>
<dbReference type="PaxDb" id="198214-SF0027"/>
<dbReference type="KEGG" id="sfl:SF0027"/>
<dbReference type="KEGG" id="sfx:S0029"/>
<dbReference type="PATRIC" id="fig|198214.7.peg.30"/>
<dbReference type="HOGENOM" id="CLU_036838_2_2_6"/>
<dbReference type="Proteomes" id="UP000001006">
    <property type="component" value="Chromosome"/>
</dbReference>
<dbReference type="Proteomes" id="UP000002673">
    <property type="component" value="Chromosome"/>
</dbReference>
<dbReference type="GO" id="GO:0005829">
    <property type="term" value="C:cytosol"/>
    <property type="evidence" value="ECO:0007669"/>
    <property type="project" value="TreeGrafter"/>
</dbReference>
<dbReference type="GO" id="GO:0008477">
    <property type="term" value="F:purine nucleosidase activity"/>
    <property type="evidence" value="ECO:0007669"/>
    <property type="project" value="TreeGrafter"/>
</dbReference>
<dbReference type="GO" id="GO:0045437">
    <property type="term" value="F:uridine nucleosidase activity"/>
    <property type="evidence" value="ECO:0007669"/>
    <property type="project" value="UniProtKB-ARBA"/>
</dbReference>
<dbReference type="GO" id="GO:0006144">
    <property type="term" value="P:purine nucleobase metabolic process"/>
    <property type="evidence" value="ECO:0007669"/>
    <property type="project" value="UniProtKB-UniRule"/>
</dbReference>
<dbReference type="GO" id="GO:0006152">
    <property type="term" value="P:purine nucleoside catabolic process"/>
    <property type="evidence" value="ECO:0007669"/>
    <property type="project" value="TreeGrafter"/>
</dbReference>
<dbReference type="GO" id="GO:0006206">
    <property type="term" value="P:pyrimidine nucleobase metabolic process"/>
    <property type="evidence" value="ECO:0007669"/>
    <property type="project" value="UniProtKB-UniRule"/>
</dbReference>
<dbReference type="CDD" id="cd02651">
    <property type="entry name" value="nuc_hydro_IU_UC_XIUA"/>
    <property type="match status" value="1"/>
</dbReference>
<dbReference type="FunFam" id="3.90.245.10:FF:000002">
    <property type="entry name" value="Non-specific ribonucleoside hydrolase RihC"/>
    <property type="match status" value="1"/>
</dbReference>
<dbReference type="Gene3D" id="3.90.245.10">
    <property type="entry name" value="Ribonucleoside hydrolase-like"/>
    <property type="match status" value="1"/>
</dbReference>
<dbReference type="HAMAP" id="MF_01432">
    <property type="entry name" value="Nucleosid_hydro_RihC"/>
    <property type="match status" value="1"/>
</dbReference>
<dbReference type="InterPro" id="IPR015910">
    <property type="entry name" value="I/U_nuclsd_hydro_CS"/>
</dbReference>
<dbReference type="InterPro" id="IPR001910">
    <property type="entry name" value="Inosine/uridine_hydrolase_dom"/>
</dbReference>
<dbReference type="InterPro" id="IPR023186">
    <property type="entry name" value="IUNH"/>
</dbReference>
<dbReference type="InterPro" id="IPR022976">
    <property type="entry name" value="Nucleosid_hydro_RihC_nonspecif"/>
</dbReference>
<dbReference type="InterPro" id="IPR036452">
    <property type="entry name" value="Ribo_hydro-like"/>
</dbReference>
<dbReference type="NCBIfam" id="NF008036">
    <property type="entry name" value="PRK10768.1"/>
    <property type="match status" value="1"/>
</dbReference>
<dbReference type="PANTHER" id="PTHR12304">
    <property type="entry name" value="INOSINE-URIDINE PREFERRING NUCLEOSIDE HYDROLASE"/>
    <property type="match status" value="1"/>
</dbReference>
<dbReference type="PANTHER" id="PTHR12304:SF15">
    <property type="entry name" value="NON-SPECIFIC RIBONUCLEOSIDE HYDROLASE RIHC"/>
    <property type="match status" value="1"/>
</dbReference>
<dbReference type="Pfam" id="PF01156">
    <property type="entry name" value="IU_nuc_hydro"/>
    <property type="match status" value="1"/>
</dbReference>
<dbReference type="SUPFAM" id="SSF53590">
    <property type="entry name" value="Nucleoside hydrolase"/>
    <property type="match status" value="1"/>
</dbReference>
<dbReference type="PROSITE" id="PS01247">
    <property type="entry name" value="IUNH"/>
    <property type="match status" value="1"/>
</dbReference>
<evidence type="ECO:0000255" key="1">
    <source>
        <dbReference type="HAMAP-Rule" id="MF_01432"/>
    </source>
</evidence>
<proteinExistence type="inferred from homology"/>
<gene>
    <name evidence="1" type="primary">rihC</name>
    <name type="ordered locus">SF0027</name>
    <name type="ordered locus">S0029</name>
</gene>